<protein>
    <recommendedName>
        <fullName evidence="1">Nucleoprotein</fullName>
    </recommendedName>
    <alternativeName>
        <fullName evidence="1">Nucleocapsid protein</fullName>
        <shortName evidence="1">Protein N</shortName>
    </alternativeName>
</protein>
<organism>
    <name type="scientific">Influenza A virus (strain A/Gull/Massachusetts/26/1980 H13N6)</name>
    <dbReference type="NCBI Taxonomy" id="385626"/>
    <lineage>
        <taxon>Viruses</taxon>
        <taxon>Riboviria</taxon>
        <taxon>Orthornavirae</taxon>
        <taxon>Negarnaviricota</taxon>
        <taxon>Polyploviricotina</taxon>
        <taxon>Insthoviricetes</taxon>
        <taxon>Articulavirales</taxon>
        <taxon>Orthomyxoviridae</taxon>
        <taxon>Alphainfluenzavirus</taxon>
        <taxon>Alphainfluenzavirus influenzae</taxon>
        <taxon>Influenza A virus</taxon>
    </lineage>
</organism>
<feature type="chain" id="PRO_0000079057" description="Nucleoprotein">
    <location>
        <begin position="1"/>
        <end position="498"/>
    </location>
</feature>
<feature type="region of interest" description="Disordered" evidence="2">
    <location>
        <begin position="1"/>
        <end position="22"/>
    </location>
</feature>
<feature type="short sequence motif" description="Unconventional nuclear localization signal" evidence="1">
    <location>
        <begin position="1"/>
        <end position="18"/>
    </location>
</feature>
<feature type="short sequence motif" description="Bipartite nuclear localization signal" evidence="1">
    <location>
        <begin position="198"/>
        <end position="216"/>
    </location>
</feature>
<comment type="function">
    <text evidence="1">Encapsidates the negative strand viral RNA, protecting it from nucleases. The encapsidated genomic RNA is termed the ribonucleoprotein (RNP) and serves as template for transcription and replication. The RNP needs to be localized in the host nucleus to start an infectious cycle, but is too large to diffuse through the nuclear pore complex. NP comprises at least 2 nuclear localization signals that are responsible for the active RNP import into the nucleus through cellular importin alpha/beta pathway. Later in the infection, nclear export of RNPs are mediated through viral proteins NEP interacting with M1 which binds nucleoproteins. It is possible that nucleoprotein binds directly host exportin-1/XPO1 and plays an active role in RNPs nuclear export. M1 interaction with RNP seems to hide nucleoprotein's nuclear localization signals. Soon after a virion infects a new cell, M1 dissociates from the RNP under acidification of the virion driven by M2 protein. Dissociation of M1 from RNP unmasks nucleoprotein's nuclear localization signals, targeting the RNP to the nucleus.</text>
</comment>
<comment type="subunit">
    <text evidence="1">Homomultimerizes to form the nucleocapsid. May bind host exportin-1/XPO1. Binds to viral genomic RNA. Protein-RNA contacts are mediated by a combination of electrostatic interactions between positively charged residues and the phosphate backbone and planar interactions between aromatic side chains and bases.</text>
</comment>
<comment type="subcellular location">
    <subcellularLocation>
        <location evidence="1">Virion</location>
    </subcellularLocation>
    <subcellularLocation>
        <location evidence="1">Host nucleus</location>
    </subcellularLocation>
</comment>
<comment type="PTM">
    <text evidence="1">Late in virus-infected cells, may be cleaved from a 56-kDa protein to a 53-kDa protein by a cellular caspase. This cleavage might be a marker for the onset of apoptosis in infected cells or have a specific function in virus host interaction.</text>
</comment>
<comment type="similarity">
    <text evidence="1">Belongs to the influenza viruses nucleoprotein family.</text>
</comment>
<organismHost>
    <name type="scientific">Aves</name>
    <dbReference type="NCBI Taxonomy" id="8782"/>
</organismHost>
<sequence>MASQGTKRSYEQMETGGERQNANEIRASVGRMVGGIGRFYIQMCTELKLSDNEGRLIQNSITIERMVLSAFDERRNKYLEEHPSTGRDPKKTGGPIYRRRDGKWVRELVLYDKEELRRIWRQANNGEDATAGLTHLMIWHSNLNDATYQRTRAHVRTGMDPRMCSLMQGSTLPRRSGAAGAAVKGVGTMVMELIRMIKRGVNDRNFWRGENGRRTRIAYERMCNILKGKFQTAAQRAMMDQVRESRNPGNAEIEDLIFLARSALILRGAVAHKSCLPACVYGLAVASGYDFEREGYSLVGIDPFRLLQNSQVFSLIRPNENPAHKSQLVWMACHSAAFEDLRVSSFIRGTRVLPRGQLSTRGVQIASNENMETMNSSTLELRSKYWAIRTRSGGNTNQQRASAGQVSVQPTFSVQRNLPFERATIMAAFTGNPEGRTSDMRTEIIRMMENSRPEDVSFQGRGVFELSDEKATNPIVPSFDMSNEGSYFFGDNAEEYDN</sequence>
<dbReference type="EMBL" id="M30752">
    <property type="protein sequence ID" value="AAA43460.1"/>
    <property type="molecule type" value="Genomic_RNA"/>
</dbReference>
<dbReference type="SMR" id="P15669"/>
<dbReference type="GO" id="GO:0019029">
    <property type="term" value="C:helical viral capsid"/>
    <property type="evidence" value="ECO:0007669"/>
    <property type="project" value="UniProtKB-UniRule"/>
</dbReference>
<dbReference type="GO" id="GO:0043657">
    <property type="term" value="C:host cell"/>
    <property type="evidence" value="ECO:0007669"/>
    <property type="project" value="GOC"/>
</dbReference>
<dbReference type="GO" id="GO:0042025">
    <property type="term" value="C:host cell nucleus"/>
    <property type="evidence" value="ECO:0007669"/>
    <property type="project" value="UniProtKB-SubCell"/>
</dbReference>
<dbReference type="GO" id="GO:1990904">
    <property type="term" value="C:ribonucleoprotein complex"/>
    <property type="evidence" value="ECO:0007669"/>
    <property type="project" value="UniProtKB-KW"/>
</dbReference>
<dbReference type="GO" id="GO:0019013">
    <property type="term" value="C:viral nucleocapsid"/>
    <property type="evidence" value="ECO:0007669"/>
    <property type="project" value="UniProtKB-UniRule"/>
</dbReference>
<dbReference type="GO" id="GO:0003723">
    <property type="term" value="F:RNA binding"/>
    <property type="evidence" value="ECO:0007669"/>
    <property type="project" value="UniProtKB-UniRule"/>
</dbReference>
<dbReference type="GO" id="GO:0005198">
    <property type="term" value="F:structural molecule activity"/>
    <property type="evidence" value="ECO:0007669"/>
    <property type="project" value="UniProtKB-UniRule"/>
</dbReference>
<dbReference type="GO" id="GO:0046718">
    <property type="term" value="P:symbiont entry into host cell"/>
    <property type="evidence" value="ECO:0007669"/>
    <property type="project" value="UniProtKB-KW"/>
</dbReference>
<dbReference type="GO" id="GO:0075732">
    <property type="term" value="P:viral penetration into host nucleus"/>
    <property type="evidence" value="ECO:0007669"/>
    <property type="project" value="UniProtKB-UniRule"/>
</dbReference>
<dbReference type="HAMAP" id="MF_04070">
    <property type="entry name" value="INFV_NCAP"/>
    <property type="match status" value="1"/>
</dbReference>
<dbReference type="InterPro" id="IPR002141">
    <property type="entry name" value="Flu_NP"/>
</dbReference>
<dbReference type="Pfam" id="PF00506">
    <property type="entry name" value="Flu_NP"/>
    <property type="match status" value="1"/>
</dbReference>
<dbReference type="SUPFAM" id="SSF161003">
    <property type="entry name" value="flu NP-like"/>
    <property type="match status" value="1"/>
</dbReference>
<gene>
    <name evidence="1" type="primary">NP</name>
</gene>
<keyword id="KW-0167">Capsid protein</keyword>
<keyword id="KW-1139">Helical capsid protein</keyword>
<keyword id="KW-1048">Host nucleus</keyword>
<keyword id="KW-0945">Host-virus interaction</keyword>
<keyword id="KW-0687">Ribonucleoprotein</keyword>
<keyword id="KW-0694">RNA-binding</keyword>
<keyword id="KW-0543">Viral nucleoprotein</keyword>
<keyword id="KW-1163">Viral penetration into host nucleus</keyword>
<keyword id="KW-0946">Virion</keyword>
<keyword id="KW-1160">Virus entry into host cell</keyword>
<name>NCAP_I80AC</name>
<proteinExistence type="inferred from homology"/>
<accession>P15669</accession>
<evidence type="ECO:0000255" key="1">
    <source>
        <dbReference type="HAMAP-Rule" id="MF_04070"/>
    </source>
</evidence>
<evidence type="ECO:0000256" key="2">
    <source>
        <dbReference type="SAM" id="MobiDB-lite"/>
    </source>
</evidence>
<reference key="1">
    <citation type="journal article" date="1990" name="J. Virol.">
        <title>Evolution of the nucleoprotein gene of influenza A virus.</title>
        <authorList>
            <person name="Gorman O.T."/>
            <person name="Bean W.J."/>
            <person name="Kawaoka Y."/>
            <person name="Webster R.G."/>
        </authorList>
    </citation>
    <scope>NUCLEOTIDE SEQUENCE [GENOMIC RNA]</scope>
</reference>